<organism>
    <name type="scientific">Drosophila melanogaster</name>
    <name type="common">Fruit fly</name>
    <dbReference type="NCBI Taxonomy" id="7227"/>
    <lineage>
        <taxon>Eukaryota</taxon>
        <taxon>Metazoa</taxon>
        <taxon>Ecdysozoa</taxon>
        <taxon>Arthropoda</taxon>
        <taxon>Hexapoda</taxon>
        <taxon>Insecta</taxon>
        <taxon>Pterygota</taxon>
        <taxon>Neoptera</taxon>
        <taxon>Endopterygota</taxon>
        <taxon>Diptera</taxon>
        <taxon>Brachycera</taxon>
        <taxon>Muscomorpha</taxon>
        <taxon>Ephydroidea</taxon>
        <taxon>Drosophilidae</taxon>
        <taxon>Drosophila</taxon>
        <taxon>Sophophora</taxon>
    </lineage>
</organism>
<sequence>MVVRPYNDELRYLEKVSDHCWRIKKGFQPNMNVEGCFYVNSRLERLMLEELKNSCRPGAVGGFLPGVKQIANVAALPGIVGRSIGLPDIHSGYGFAIGNMAAFDMNDPLSVVSPGGVGFDINCGVRLLRTNLYEKDVQPVKEQLAQSLFDHIPVGVGSKGIIPMNARDLEEALEMGMDWSLREGYVWAEDKEHCEEYGRMLNADPAKVSMRAKKRGLPQLGTLGAGNHYAEIQVVDEIYDKWSASKMGIEEKGQVVVMIHSGSRGFGHQVATDALVQMEKAMKRDKIETNDRQLACARINSVEGQDYLKAMAAAANFAWVNRSSMTFLTRQAFAKMFNTTPDDLDMHVIYDVSHNIAKVENHMVDGKERKLLVHRKGSTRAFPPHHPLIPVDYQLTGQPVLVGGTMGTCSYVLTGTEQGMQETFGSTCHGAGRALSRAKSRRNLDYKDVLDKLDQLGIAIRVASPKLVMEEAPESYKDVTDVVDTCHAAGISKKCIKMRPIAVIKG</sequence>
<keyword id="KW-0342">GTP-binding</keyword>
<keyword id="KW-0436">Ligase</keyword>
<keyword id="KW-0464">Manganese</keyword>
<keyword id="KW-0479">Metal-binding</keyword>
<keyword id="KW-0547">Nucleotide-binding</keyword>
<keyword id="KW-1185">Reference proteome</keyword>
<keyword id="KW-0819">tRNA processing</keyword>
<reference key="1">
    <citation type="journal article" date="2000" name="Science">
        <title>The genome sequence of Drosophila melanogaster.</title>
        <authorList>
            <person name="Adams M.D."/>
            <person name="Celniker S.E."/>
            <person name="Holt R.A."/>
            <person name="Evans C.A."/>
            <person name="Gocayne J.D."/>
            <person name="Amanatides P.G."/>
            <person name="Scherer S.E."/>
            <person name="Li P.W."/>
            <person name="Hoskins R.A."/>
            <person name="Galle R.F."/>
            <person name="George R.A."/>
            <person name="Lewis S.E."/>
            <person name="Richards S."/>
            <person name="Ashburner M."/>
            <person name="Henderson S.N."/>
            <person name="Sutton G.G."/>
            <person name="Wortman J.R."/>
            <person name="Yandell M.D."/>
            <person name="Zhang Q."/>
            <person name="Chen L.X."/>
            <person name="Brandon R.C."/>
            <person name="Rogers Y.-H.C."/>
            <person name="Blazej R.G."/>
            <person name="Champe M."/>
            <person name="Pfeiffer B.D."/>
            <person name="Wan K.H."/>
            <person name="Doyle C."/>
            <person name="Baxter E.G."/>
            <person name="Helt G."/>
            <person name="Nelson C.R."/>
            <person name="Miklos G.L.G."/>
            <person name="Abril J.F."/>
            <person name="Agbayani A."/>
            <person name="An H.-J."/>
            <person name="Andrews-Pfannkoch C."/>
            <person name="Baldwin D."/>
            <person name="Ballew R.M."/>
            <person name="Basu A."/>
            <person name="Baxendale J."/>
            <person name="Bayraktaroglu L."/>
            <person name="Beasley E.M."/>
            <person name="Beeson K.Y."/>
            <person name="Benos P.V."/>
            <person name="Berman B.P."/>
            <person name="Bhandari D."/>
            <person name="Bolshakov S."/>
            <person name="Borkova D."/>
            <person name="Botchan M.R."/>
            <person name="Bouck J."/>
            <person name="Brokstein P."/>
            <person name="Brottier P."/>
            <person name="Burtis K.C."/>
            <person name="Busam D.A."/>
            <person name="Butler H."/>
            <person name="Cadieu E."/>
            <person name="Center A."/>
            <person name="Chandra I."/>
            <person name="Cherry J.M."/>
            <person name="Cawley S."/>
            <person name="Dahlke C."/>
            <person name="Davenport L.B."/>
            <person name="Davies P."/>
            <person name="de Pablos B."/>
            <person name="Delcher A."/>
            <person name="Deng Z."/>
            <person name="Mays A.D."/>
            <person name="Dew I."/>
            <person name="Dietz S.M."/>
            <person name="Dodson K."/>
            <person name="Doup L.E."/>
            <person name="Downes M."/>
            <person name="Dugan-Rocha S."/>
            <person name="Dunkov B.C."/>
            <person name="Dunn P."/>
            <person name="Durbin K.J."/>
            <person name="Evangelista C.C."/>
            <person name="Ferraz C."/>
            <person name="Ferriera S."/>
            <person name="Fleischmann W."/>
            <person name="Fosler C."/>
            <person name="Gabrielian A.E."/>
            <person name="Garg N.S."/>
            <person name="Gelbart W.M."/>
            <person name="Glasser K."/>
            <person name="Glodek A."/>
            <person name="Gong F."/>
            <person name="Gorrell J.H."/>
            <person name="Gu Z."/>
            <person name="Guan P."/>
            <person name="Harris M."/>
            <person name="Harris N.L."/>
            <person name="Harvey D.A."/>
            <person name="Heiman T.J."/>
            <person name="Hernandez J.R."/>
            <person name="Houck J."/>
            <person name="Hostin D."/>
            <person name="Houston K.A."/>
            <person name="Howland T.J."/>
            <person name="Wei M.-H."/>
            <person name="Ibegwam C."/>
            <person name="Jalali M."/>
            <person name="Kalush F."/>
            <person name="Karpen G.H."/>
            <person name="Ke Z."/>
            <person name="Kennison J.A."/>
            <person name="Ketchum K.A."/>
            <person name="Kimmel B.E."/>
            <person name="Kodira C.D."/>
            <person name="Kraft C.L."/>
            <person name="Kravitz S."/>
            <person name="Kulp D."/>
            <person name="Lai Z."/>
            <person name="Lasko P."/>
            <person name="Lei Y."/>
            <person name="Levitsky A.A."/>
            <person name="Li J.H."/>
            <person name="Li Z."/>
            <person name="Liang Y."/>
            <person name="Lin X."/>
            <person name="Liu X."/>
            <person name="Mattei B."/>
            <person name="McIntosh T.C."/>
            <person name="McLeod M.P."/>
            <person name="McPherson D."/>
            <person name="Merkulov G."/>
            <person name="Milshina N.V."/>
            <person name="Mobarry C."/>
            <person name="Morris J."/>
            <person name="Moshrefi A."/>
            <person name="Mount S.M."/>
            <person name="Moy M."/>
            <person name="Murphy B."/>
            <person name="Murphy L."/>
            <person name="Muzny D.M."/>
            <person name="Nelson D.L."/>
            <person name="Nelson D.R."/>
            <person name="Nelson K.A."/>
            <person name="Nixon K."/>
            <person name="Nusskern D.R."/>
            <person name="Pacleb J.M."/>
            <person name="Palazzolo M."/>
            <person name="Pittman G.S."/>
            <person name="Pan S."/>
            <person name="Pollard J."/>
            <person name="Puri V."/>
            <person name="Reese M.G."/>
            <person name="Reinert K."/>
            <person name="Remington K."/>
            <person name="Saunders R.D.C."/>
            <person name="Scheeler F."/>
            <person name="Shen H."/>
            <person name="Shue B.C."/>
            <person name="Siden-Kiamos I."/>
            <person name="Simpson M."/>
            <person name="Skupski M.P."/>
            <person name="Smith T.J."/>
            <person name="Spier E."/>
            <person name="Spradling A.C."/>
            <person name="Stapleton M."/>
            <person name="Strong R."/>
            <person name="Sun E."/>
            <person name="Svirskas R."/>
            <person name="Tector C."/>
            <person name="Turner R."/>
            <person name="Venter E."/>
            <person name="Wang A.H."/>
            <person name="Wang X."/>
            <person name="Wang Z.-Y."/>
            <person name="Wassarman D.A."/>
            <person name="Weinstock G.M."/>
            <person name="Weissenbach J."/>
            <person name="Williams S.M."/>
            <person name="Woodage T."/>
            <person name="Worley K.C."/>
            <person name="Wu D."/>
            <person name="Yang S."/>
            <person name="Yao Q.A."/>
            <person name="Ye J."/>
            <person name="Yeh R.-F."/>
            <person name="Zaveri J.S."/>
            <person name="Zhan M."/>
            <person name="Zhang G."/>
            <person name="Zhao Q."/>
            <person name="Zheng L."/>
            <person name="Zheng X.H."/>
            <person name="Zhong F.N."/>
            <person name="Zhong W."/>
            <person name="Zhou X."/>
            <person name="Zhu S.C."/>
            <person name="Zhu X."/>
            <person name="Smith H.O."/>
            <person name="Gibbs R.A."/>
            <person name="Myers E.W."/>
            <person name="Rubin G.M."/>
            <person name="Venter J.C."/>
        </authorList>
    </citation>
    <scope>NUCLEOTIDE SEQUENCE [LARGE SCALE GENOMIC DNA]</scope>
    <source>
        <strain>Berkeley</strain>
    </source>
</reference>
<reference key="2">
    <citation type="journal article" date="2002" name="Genome Biol.">
        <title>Annotation of the Drosophila melanogaster euchromatic genome: a systematic review.</title>
        <authorList>
            <person name="Misra S."/>
            <person name="Crosby M.A."/>
            <person name="Mungall C.J."/>
            <person name="Matthews B.B."/>
            <person name="Campbell K.S."/>
            <person name="Hradecky P."/>
            <person name="Huang Y."/>
            <person name="Kaminker J.S."/>
            <person name="Millburn G.H."/>
            <person name="Prochnik S.E."/>
            <person name="Smith C.D."/>
            <person name="Tupy J.L."/>
            <person name="Whitfield E.J."/>
            <person name="Bayraktaroglu L."/>
            <person name="Berman B.P."/>
            <person name="Bettencourt B.R."/>
            <person name="Celniker S.E."/>
            <person name="de Grey A.D.N.J."/>
            <person name="Drysdale R.A."/>
            <person name="Harris N.L."/>
            <person name="Richter J."/>
            <person name="Russo S."/>
            <person name="Schroeder A.J."/>
            <person name="Shu S.Q."/>
            <person name="Stapleton M."/>
            <person name="Yamada C."/>
            <person name="Ashburner M."/>
            <person name="Gelbart W.M."/>
            <person name="Rubin G.M."/>
            <person name="Lewis S.E."/>
        </authorList>
    </citation>
    <scope>GENOME REANNOTATION</scope>
    <scope>ALTERNATIVE SPLICING (ISOFORMS AND B)</scope>
    <source>
        <strain>Berkeley</strain>
    </source>
</reference>
<reference key="3">
    <citation type="journal article" date="2002" name="Genome Biol.">
        <title>A Drosophila full-length cDNA resource.</title>
        <authorList>
            <person name="Stapleton M."/>
            <person name="Carlson J.W."/>
            <person name="Brokstein P."/>
            <person name="Yu C."/>
            <person name="Champe M."/>
            <person name="George R.A."/>
            <person name="Guarin H."/>
            <person name="Kronmiller B."/>
            <person name="Pacleb J.M."/>
            <person name="Park S."/>
            <person name="Wan K.H."/>
            <person name="Rubin G.M."/>
            <person name="Celniker S.E."/>
        </authorList>
    </citation>
    <scope>NUCLEOTIDE SEQUENCE [LARGE SCALE MRNA]</scope>
    <source>
        <strain>Berkeley</strain>
        <tissue>Embryo</tissue>
    </source>
</reference>
<comment type="function">
    <text evidence="1">Catalytic subunit of the tRNA-splicing ligase complex that acts by directly joining spliced tRNA halves to mature-sized tRNAs by incorporating the precursor-derived splice junction phosphate into the mature tRNA as a canonical 3',5'-phosphodiester. May act as an RNA ligase with broad substrate specificity, and may function toward other RNAs.</text>
</comment>
<comment type="catalytic activity">
    <reaction evidence="1">
        <text>a 3'-end 3'-phospho-ribonucleotide-RNA + a 5'-end dephospho-ribonucleoside-RNA + GTP = a ribonucleotidyl-ribonucleotide-RNA + GMP + diphosphate</text>
        <dbReference type="Rhea" id="RHEA:68076"/>
        <dbReference type="Rhea" id="RHEA-COMP:10463"/>
        <dbReference type="Rhea" id="RHEA-COMP:13936"/>
        <dbReference type="Rhea" id="RHEA-COMP:17355"/>
        <dbReference type="ChEBI" id="CHEBI:33019"/>
        <dbReference type="ChEBI" id="CHEBI:37565"/>
        <dbReference type="ChEBI" id="CHEBI:58115"/>
        <dbReference type="ChEBI" id="CHEBI:83062"/>
        <dbReference type="ChEBI" id="CHEBI:138284"/>
        <dbReference type="ChEBI" id="CHEBI:173118"/>
        <dbReference type="EC" id="6.5.1.8"/>
    </reaction>
</comment>
<comment type="catalytic activity">
    <reaction evidence="1">
        <text>a 3'-end 2',3'-cyclophospho-ribonucleotide-RNA + a 5'-end dephospho-ribonucleoside-RNA + GTP + H2O = a ribonucleotidyl-ribonucleotide-RNA + GMP + diphosphate + H(+)</text>
        <dbReference type="Rhea" id="RHEA:68080"/>
        <dbReference type="Rhea" id="RHEA-COMP:10464"/>
        <dbReference type="Rhea" id="RHEA-COMP:13936"/>
        <dbReference type="Rhea" id="RHEA-COMP:17355"/>
        <dbReference type="ChEBI" id="CHEBI:15377"/>
        <dbReference type="ChEBI" id="CHEBI:15378"/>
        <dbReference type="ChEBI" id="CHEBI:33019"/>
        <dbReference type="ChEBI" id="CHEBI:37565"/>
        <dbReference type="ChEBI" id="CHEBI:58115"/>
        <dbReference type="ChEBI" id="CHEBI:83064"/>
        <dbReference type="ChEBI" id="CHEBI:138284"/>
        <dbReference type="ChEBI" id="CHEBI:173118"/>
        <dbReference type="EC" id="6.5.1.8"/>
    </reaction>
</comment>
<comment type="cofactor">
    <cofactor evidence="1">
        <name>Mn(2+)</name>
        <dbReference type="ChEBI" id="CHEBI:29035"/>
    </cofactor>
    <text evidence="1">Binds 2 manganese ions per subunit.</text>
</comment>
<comment type="subunit">
    <text evidence="1">Catalytic component of the tRNA-splicing ligase complex.</text>
</comment>
<comment type="miscellaneous">
    <text evidence="1">Ligation probably proceeds through 3 nucleotidyl transfer steps, with 2',3'-cyclic phosphate termini being hydrolyzed to 3'-P termini in a step that precedes 3'-P activation with GMP. In the first nucleotidyl transfer step, RTCB reacts with GTP to form a covalent RTCB-histidine-GMP intermediate with release of PPi; in the second step, the GMP moiety is transferred to the RNA 3'-P; in the third step, the 5'-OH from the opposite RNA strand attacks the activated 3'-P to form a 3',5'-phosphodiester bond and release GMP.</text>
</comment>
<comment type="similarity">
    <text evidence="1">Belongs to the RtcB family.</text>
</comment>
<evidence type="ECO:0000255" key="1">
    <source>
        <dbReference type="HAMAP-Rule" id="MF_03144"/>
    </source>
</evidence>
<evidence type="ECO:0000312" key="2">
    <source>
        <dbReference type="FlyBase" id="FBgn0032781"/>
    </source>
</evidence>
<name>RTCB_DROME</name>
<feature type="chain" id="PRO_0000407226" description="RNA-splicing ligase RtcB homolog">
    <location>
        <begin position="1"/>
        <end position="506"/>
    </location>
</feature>
<feature type="active site" description="GMP-histidine intermediate" evidence="1">
    <location>
        <position position="429"/>
    </location>
</feature>
<feature type="binding site" evidence="1">
    <location>
        <position position="120"/>
    </location>
    <ligand>
        <name>Mn(2+)</name>
        <dbReference type="ChEBI" id="CHEBI:29035"/>
        <label>1</label>
    </ligand>
</feature>
<feature type="binding site" evidence="1">
    <location>
        <position position="123"/>
    </location>
    <ligand>
        <name>Mn(2+)</name>
        <dbReference type="ChEBI" id="CHEBI:29035"/>
        <label>1</label>
    </ligand>
</feature>
<feature type="binding site" evidence="1">
    <location>
        <position position="123"/>
    </location>
    <ligand>
        <name>Mn(2+)</name>
        <dbReference type="ChEBI" id="CHEBI:29035"/>
        <label>2</label>
    </ligand>
</feature>
<feature type="binding site" evidence="1">
    <location>
        <begin position="227"/>
        <end position="231"/>
    </location>
    <ligand>
        <name>GMP</name>
        <dbReference type="ChEBI" id="CHEBI:58115"/>
    </ligand>
</feature>
<feature type="binding site" evidence="1">
    <location>
        <position position="228"/>
    </location>
    <ligand>
        <name>Mn(2+)</name>
        <dbReference type="ChEBI" id="CHEBI:29035"/>
        <label>1</label>
    </ligand>
</feature>
<feature type="binding site" evidence="1">
    <location>
        <position position="260"/>
    </location>
    <ligand>
        <name>Mn(2+)</name>
        <dbReference type="ChEBI" id="CHEBI:29035"/>
        <label>2</label>
    </ligand>
</feature>
<feature type="binding site" evidence="1">
    <location>
        <begin position="354"/>
        <end position="355"/>
    </location>
    <ligand>
        <name>GMP</name>
        <dbReference type="ChEBI" id="CHEBI:58115"/>
    </ligand>
</feature>
<feature type="binding site" evidence="1">
    <location>
        <position position="354"/>
    </location>
    <ligand>
        <name>Mn(2+)</name>
        <dbReference type="ChEBI" id="CHEBI:29035"/>
        <label>2</label>
    </ligand>
</feature>
<feature type="binding site" evidence="1">
    <location>
        <begin position="403"/>
        <end position="406"/>
    </location>
    <ligand>
        <name>GMP</name>
        <dbReference type="ChEBI" id="CHEBI:58115"/>
    </ligand>
</feature>
<feature type="binding site" evidence="1">
    <location>
        <position position="410"/>
    </location>
    <ligand>
        <name>GMP</name>
        <dbReference type="ChEBI" id="CHEBI:58115"/>
    </ligand>
</feature>
<feature type="binding site" evidence="1">
    <location>
        <begin position="429"/>
        <end position="432"/>
    </location>
    <ligand>
        <name>GMP</name>
        <dbReference type="ChEBI" id="CHEBI:58115"/>
    </ligand>
</feature>
<feature type="binding site" evidence="1">
    <location>
        <position position="505"/>
    </location>
    <ligand>
        <name>GMP</name>
        <dbReference type="ChEBI" id="CHEBI:58115"/>
    </ligand>
</feature>
<gene>
    <name evidence="2" type="primary">RtcB</name>
    <name evidence="2" type="ORF">CG9987</name>
</gene>
<dbReference type="EC" id="6.5.1.8" evidence="1"/>
<dbReference type="EMBL" id="AE014134">
    <property type="protein sequence ID" value="AAF53797.1"/>
    <property type="molecule type" value="Genomic_DNA"/>
</dbReference>
<dbReference type="EMBL" id="AY119213">
    <property type="protein sequence ID" value="AAM51073.1"/>
    <property type="molecule type" value="mRNA"/>
</dbReference>
<dbReference type="RefSeq" id="NP_609965.1">
    <property type="nucleotide sequence ID" value="NM_136121.2"/>
</dbReference>
<dbReference type="SMR" id="Q9VIW7"/>
<dbReference type="BioGRID" id="61199">
    <property type="interactions" value="3"/>
</dbReference>
<dbReference type="FunCoup" id="Q9VIW7">
    <property type="interactions" value="1567"/>
</dbReference>
<dbReference type="IntAct" id="Q9VIW7">
    <property type="interactions" value="2"/>
</dbReference>
<dbReference type="STRING" id="7227.FBpp0080746"/>
<dbReference type="PaxDb" id="7227-FBpp0080746"/>
<dbReference type="DNASU" id="35220"/>
<dbReference type="EnsemblMetazoa" id="FBtr0081205">
    <property type="protein sequence ID" value="FBpp0080746"/>
    <property type="gene ID" value="FBgn0032781"/>
</dbReference>
<dbReference type="GeneID" id="35220"/>
<dbReference type="KEGG" id="dme:Dmel_CG9987"/>
<dbReference type="UCSC" id="CG9987-RA">
    <property type="organism name" value="d. melanogaster"/>
</dbReference>
<dbReference type="AGR" id="FB:FBgn0032781"/>
<dbReference type="CTD" id="51493"/>
<dbReference type="FlyBase" id="FBgn0032781">
    <property type="gene designation" value="RtcB"/>
</dbReference>
<dbReference type="VEuPathDB" id="VectorBase:FBgn0032781"/>
<dbReference type="eggNOG" id="KOG3833">
    <property type="taxonomic scope" value="Eukaryota"/>
</dbReference>
<dbReference type="GeneTree" id="ENSGT00940000155911"/>
<dbReference type="HOGENOM" id="CLU_022279_0_0_1"/>
<dbReference type="InParanoid" id="Q9VIW7"/>
<dbReference type="OMA" id="QTRGVEC"/>
<dbReference type="OrthoDB" id="10249697at2759"/>
<dbReference type="PhylomeDB" id="Q9VIW7"/>
<dbReference type="BioGRID-ORCS" id="35220">
    <property type="hits" value="0 hits in 1 CRISPR screen"/>
</dbReference>
<dbReference type="GenomeRNAi" id="35220"/>
<dbReference type="PRO" id="PR:Q9VIW7"/>
<dbReference type="Proteomes" id="UP000000803">
    <property type="component" value="Chromosome 2L"/>
</dbReference>
<dbReference type="Bgee" id="FBgn0032781">
    <property type="expression patterns" value="Expressed in eye disc (Drosophila) and 90 other cell types or tissues"/>
</dbReference>
<dbReference type="GO" id="GO:0005634">
    <property type="term" value="C:nucleus"/>
    <property type="evidence" value="ECO:0000318"/>
    <property type="project" value="GO_Central"/>
</dbReference>
<dbReference type="GO" id="GO:0072669">
    <property type="term" value="C:tRNA-splicing ligase complex"/>
    <property type="evidence" value="ECO:0000318"/>
    <property type="project" value="GO_Central"/>
</dbReference>
<dbReference type="GO" id="GO:0005525">
    <property type="term" value="F:GTP binding"/>
    <property type="evidence" value="ECO:0007669"/>
    <property type="project" value="UniProtKB-KW"/>
</dbReference>
<dbReference type="GO" id="GO:0046872">
    <property type="term" value="F:metal ion binding"/>
    <property type="evidence" value="ECO:0007669"/>
    <property type="project" value="UniProtKB-KW"/>
</dbReference>
<dbReference type="GO" id="GO:0170057">
    <property type="term" value="F:RNA ligase (GTP) activity"/>
    <property type="evidence" value="ECO:0007669"/>
    <property type="project" value="UniProtKB-EC"/>
</dbReference>
<dbReference type="GO" id="GO:2000237">
    <property type="term" value="P:positive regulation of tRNA processing"/>
    <property type="evidence" value="ECO:0000315"/>
    <property type="project" value="FlyBase"/>
</dbReference>
<dbReference type="GO" id="GO:0008033">
    <property type="term" value="P:tRNA processing"/>
    <property type="evidence" value="ECO:0000315"/>
    <property type="project" value="FlyBase"/>
</dbReference>
<dbReference type="GO" id="GO:0006388">
    <property type="term" value="P:tRNA splicing, via endonucleolytic cleavage and ligation"/>
    <property type="evidence" value="ECO:0000318"/>
    <property type="project" value="GO_Central"/>
</dbReference>
<dbReference type="FunFam" id="3.90.1860.10:FF:000001">
    <property type="entry name" value="tRNA-splicing ligase RtcB homolog"/>
    <property type="match status" value="1"/>
</dbReference>
<dbReference type="Gene3D" id="3.90.1860.10">
    <property type="entry name" value="tRNA-splicing ligase RtcB"/>
    <property type="match status" value="1"/>
</dbReference>
<dbReference type="HAMAP" id="MF_03144">
    <property type="entry name" value="RtcB_euk"/>
    <property type="match status" value="1"/>
</dbReference>
<dbReference type="InterPro" id="IPR001233">
    <property type="entry name" value="RtcB"/>
</dbReference>
<dbReference type="InterPro" id="IPR036025">
    <property type="entry name" value="RtcB-like_sf"/>
</dbReference>
<dbReference type="InterPro" id="IPR027513">
    <property type="entry name" value="RtcB_euk"/>
</dbReference>
<dbReference type="PANTHER" id="PTHR11118">
    <property type="entry name" value="RNA-SPLICING LIGASE RTCB HOMOLOG"/>
    <property type="match status" value="1"/>
</dbReference>
<dbReference type="PANTHER" id="PTHR11118:SF1">
    <property type="entry name" value="RNA-SPLICING LIGASE RTCB HOMOLOG"/>
    <property type="match status" value="1"/>
</dbReference>
<dbReference type="Pfam" id="PF01139">
    <property type="entry name" value="RtcB"/>
    <property type="match status" value="1"/>
</dbReference>
<dbReference type="SUPFAM" id="SSF103365">
    <property type="entry name" value="Hypothetical protein PH1602"/>
    <property type="match status" value="1"/>
</dbReference>
<dbReference type="PROSITE" id="PS01288">
    <property type="entry name" value="UPF0027"/>
    <property type="match status" value="1"/>
</dbReference>
<proteinExistence type="evidence at transcript level"/>
<protein>
    <recommendedName>
        <fullName evidence="1">RNA-splicing ligase RtcB homolog</fullName>
        <ecNumber evidence="1">6.5.1.8</ecNumber>
    </recommendedName>
    <alternativeName>
        <fullName evidence="1">3'-phosphate/5'-hydroxy nucleic acid ligase</fullName>
    </alternativeName>
</protein>
<accession>Q9VIW7</accession>